<evidence type="ECO:0000250" key="1">
    <source>
        <dbReference type="UniProtKB" id="Q9FJG1"/>
    </source>
</evidence>
<evidence type="ECO:0000269" key="2">
    <source>
    </source>
</evidence>
<evidence type="ECO:0000303" key="3">
    <source>
    </source>
</evidence>
<evidence type="ECO:0000305" key="4"/>
<evidence type="ECO:0000312" key="5">
    <source>
        <dbReference type="Araport" id="AT3G03820"/>
    </source>
</evidence>
<evidence type="ECO:0000312" key="6">
    <source>
        <dbReference type="EMBL" id="AAF00636.1"/>
    </source>
</evidence>
<feature type="chain" id="PRO_0000454723" description="Auxin-responsive protein SAUR29">
    <location>
        <begin position="1"/>
        <end position="96"/>
    </location>
</feature>
<keyword id="KW-0927">Auxin signaling pathway</keyword>
<keyword id="KW-1003">Cell membrane</keyword>
<keyword id="KW-0217">Developmental protein</keyword>
<keyword id="KW-0341">Growth regulation</keyword>
<keyword id="KW-0472">Membrane</keyword>
<keyword id="KW-1185">Reference proteome</keyword>
<protein>
    <recommendedName>
        <fullName evidence="4">Auxin-responsive protein SAUR29</fullName>
    </recommendedName>
    <alternativeName>
        <fullName evidence="3">Protein SMALL AUXIN UP RNA 29</fullName>
    </alternativeName>
</protein>
<proteinExistence type="evidence at transcript level"/>
<sequence length="96" mass="10449">MALVRGFMAAKKILGGSVAGTRKETSAPKGFLAVYVGESQRKKQRHLVPVSYLNQPLFQALLIKAEEEFGFNHPMGGLTIPCPEDTFLTVTSQIQG</sequence>
<accession>Q9SRV9</accession>
<accession>A0A178V4U8</accession>
<dbReference type="EMBL" id="AC009540">
    <property type="protein sequence ID" value="AAF00636.1"/>
    <property type="molecule type" value="Genomic_DNA"/>
</dbReference>
<dbReference type="EMBL" id="CP002686">
    <property type="protein sequence ID" value="AEE73997.1"/>
    <property type="molecule type" value="Genomic_DNA"/>
</dbReference>
<dbReference type="RefSeq" id="NP_001319462.1">
    <property type="nucleotide sequence ID" value="NM_001337490.1"/>
</dbReference>
<dbReference type="FunCoup" id="Q9SRV9">
    <property type="interactions" value="360"/>
</dbReference>
<dbReference type="STRING" id="3702.Q9SRV9"/>
<dbReference type="PaxDb" id="3702-AT3G03820.1"/>
<dbReference type="EnsemblPlants" id="AT3G03820.1">
    <property type="protein sequence ID" value="AT3G03820.1"/>
    <property type="gene ID" value="AT3G03820"/>
</dbReference>
<dbReference type="GeneID" id="28718697"/>
<dbReference type="Gramene" id="AT3G03820.1">
    <property type="protein sequence ID" value="AT3G03820.1"/>
    <property type="gene ID" value="AT3G03820"/>
</dbReference>
<dbReference type="KEGG" id="ath:AT3G03820"/>
<dbReference type="Araport" id="AT3G03820"/>
<dbReference type="TAIR" id="AT3G03820">
    <property type="gene designation" value="SAUR29"/>
</dbReference>
<dbReference type="HOGENOM" id="CLU_098106_3_0_1"/>
<dbReference type="InParanoid" id="Q9SRV9"/>
<dbReference type="OMA" id="CRENTFI"/>
<dbReference type="OrthoDB" id="625231at2759"/>
<dbReference type="PhylomeDB" id="Q9SRV9"/>
<dbReference type="PRO" id="PR:Q9SRV9"/>
<dbReference type="Proteomes" id="UP000006548">
    <property type="component" value="Chromosome 3"/>
</dbReference>
<dbReference type="ExpressionAtlas" id="Q9SRV9">
    <property type="expression patterns" value="baseline and differential"/>
</dbReference>
<dbReference type="GO" id="GO:0005886">
    <property type="term" value="C:plasma membrane"/>
    <property type="evidence" value="ECO:0007669"/>
    <property type="project" value="UniProtKB-SubCell"/>
</dbReference>
<dbReference type="GO" id="GO:0009734">
    <property type="term" value="P:auxin-activated signaling pathway"/>
    <property type="evidence" value="ECO:0007669"/>
    <property type="project" value="UniProtKB-KW"/>
</dbReference>
<dbReference type="GO" id="GO:0009266">
    <property type="term" value="P:response to temperature stimulus"/>
    <property type="evidence" value="ECO:0000315"/>
    <property type="project" value="UniProtKB"/>
</dbReference>
<dbReference type="InterPro" id="IPR003676">
    <property type="entry name" value="SAUR_fam"/>
</dbReference>
<dbReference type="PANTHER" id="PTHR31929">
    <property type="entry name" value="SAUR-LIKE AUXIN-RESPONSIVE PROTEIN FAMILY-RELATED"/>
    <property type="match status" value="1"/>
</dbReference>
<dbReference type="Pfam" id="PF02519">
    <property type="entry name" value="Auxin_inducible"/>
    <property type="match status" value="1"/>
</dbReference>
<comment type="function">
    <text evidence="1 2">Functions as a positive effector of cell expansion through modulation of auxin transport (By similarity). Involved in thermo-responsiveness of plant architecture (PubMed:31127632). Enhances plasma membrane H(+)-ATPase (PubMed:31127632).</text>
</comment>
<comment type="subcellular location">
    <subcellularLocation>
        <location evidence="1">Cell membrane</location>
        <topology evidence="1">Peripheral membrane protein</topology>
    </subcellularLocation>
</comment>
<comment type="induction">
    <text evidence="2">PIF4-dependent regulation by temperature (PubMed:31127632). In low thermo-responsive cultivars (e.g. Col-0), higher expression at 28 degrees Celsius than at 22 degrees Celsius in petioles but not in leaf blades (PubMed:31127632). In high thermo-responsive cultivars (e.g. cv. Alst-1 and cv. Ang-0) higher expression at 28 degrees Celsius than at 22 degrees Celsius in both petioles and leaf blades (PubMed:31127632).</text>
</comment>
<comment type="disruption phenotype">
    <text evidence="2">Reduced rosette weight and area at 22 degrees Celsius but not at 28 degrees Celsius.</text>
</comment>
<comment type="similarity">
    <text evidence="4">Belongs to the ARG7 family.</text>
</comment>
<name>SAU29_ARATH</name>
<gene>
    <name evidence="3" type="primary">SAUR29</name>
    <name evidence="5" type="ordered locus">At3g03820</name>
    <name evidence="6" type="ORF">F20H23.16</name>
</gene>
<reference key="1">
    <citation type="journal article" date="2000" name="Nature">
        <title>Sequence and analysis of chromosome 3 of the plant Arabidopsis thaliana.</title>
        <authorList>
            <person name="Salanoubat M."/>
            <person name="Lemcke K."/>
            <person name="Rieger M."/>
            <person name="Ansorge W."/>
            <person name="Unseld M."/>
            <person name="Fartmann B."/>
            <person name="Valle G."/>
            <person name="Bloecker H."/>
            <person name="Perez-Alonso M."/>
            <person name="Obermaier B."/>
            <person name="Delseny M."/>
            <person name="Boutry M."/>
            <person name="Grivell L.A."/>
            <person name="Mache R."/>
            <person name="Puigdomenech P."/>
            <person name="De Simone V."/>
            <person name="Choisne N."/>
            <person name="Artiguenave F."/>
            <person name="Robert C."/>
            <person name="Brottier P."/>
            <person name="Wincker P."/>
            <person name="Cattolico L."/>
            <person name="Weissenbach J."/>
            <person name="Saurin W."/>
            <person name="Quetier F."/>
            <person name="Schaefer M."/>
            <person name="Mueller-Auer S."/>
            <person name="Gabel C."/>
            <person name="Fuchs M."/>
            <person name="Benes V."/>
            <person name="Wurmbach E."/>
            <person name="Drzonek H."/>
            <person name="Erfle H."/>
            <person name="Jordan N."/>
            <person name="Bangert S."/>
            <person name="Wiedelmann R."/>
            <person name="Kranz H."/>
            <person name="Voss H."/>
            <person name="Holland R."/>
            <person name="Brandt P."/>
            <person name="Nyakatura G."/>
            <person name="Vezzi A."/>
            <person name="D'Angelo M."/>
            <person name="Pallavicini A."/>
            <person name="Toppo S."/>
            <person name="Simionati B."/>
            <person name="Conrad A."/>
            <person name="Hornischer K."/>
            <person name="Kauer G."/>
            <person name="Loehnert T.-H."/>
            <person name="Nordsiek G."/>
            <person name="Reichelt J."/>
            <person name="Scharfe M."/>
            <person name="Schoen O."/>
            <person name="Bargues M."/>
            <person name="Terol J."/>
            <person name="Climent J."/>
            <person name="Navarro P."/>
            <person name="Collado C."/>
            <person name="Perez-Perez A."/>
            <person name="Ottenwaelder B."/>
            <person name="Duchemin D."/>
            <person name="Cooke R."/>
            <person name="Laudie M."/>
            <person name="Berger-Llauro C."/>
            <person name="Purnelle B."/>
            <person name="Masuy D."/>
            <person name="de Haan M."/>
            <person name="Maarse A.C."/>
            <person name="Alcaraz J.-P."/>
            <person name="Cottet A."/>
            <person name="Casacuberta E."/>
            <person name="Monfort A."/>
            <person name="Argiriou A."/>
            <person name="Flores M."/>
            <person name="Liguori R."/>
            <person name="Vitale D."/>
            <person name="Mannhaupt G."/>
            <person name="Haase D."/>
            <person name="Schoof H."/>
            <person name="Rudd S."/>
            <person name="Zaccaria P."/>
            <person name="Mewes H.-W."/>
            <person name="Mayer K.F.X."/>
            <person name="Kaul S."/>
            <person name="Town C.D."/>
            <person name="Koo H.L."/>
            <person name="Tallon L.J."/>
            <person name="Jenkins J."/>
            <person name="Rooney T."/>
            <person name="Rizzo M."/>
            <person name="Walts A."/>
            <person name="Utterback T."/>
            <person name="Fujii C.Y."/>
            <person name="Shea T.P."/>
            <person name="Creasy T.H."/>
            <person name="Haas B."/>
            <person name="Maiti R."/>
            <person name="Wu D."/>
            <person name="Peterson J."/>
            <person name="Van Aken S."/>
            <person name="Pai G."/>
            <person name="Militscher J."/>
            <person name="Sellers P."/>
            <person name="Gill J.E."/>
            <person name="Feldblyum T.V."/>
            <person name="Preuss D."/>
            <person name="Lin X."/>
            <person name="Nierman W.C."/>
            <person name="Salzberg S.L."/>
            <person name="White O."/>
            <person name="Venter J.C."/>
            <person name="Fraser C.M."/>
            <person name="Kaneko T."/>
            <person name="Nakamura Y."/>
            <person name="Sato S."/>
            <person name="Kato T."/>
            <person name="Asamizu E."/>
            <person name="Sasamoto S."/>
            <person name="Kimura T."/>
            <person name="Idesawa K."/>
            <person name="Kawashima K."/>
            <person name="Kishida Y."/>
            <person name="Kiyokawa C."/>
            <person name="Kohara M."/>
            <person name="Matsumoto M."/>
            <person name="Matsuno A."/>
            <person name="Muraki A."/>
            <person name="Nakayama S."/>
            <person name="Nakazaki N."/>
            <person name="Shinpo S."/>
            <person name="Takeuchi C."/>
            <person name="Wada T."/>
            <person name="Watanabe A."/>
            <person name="Yamada M."/>
            <person name="Yasuda M."/>
            <person name="Tabata S."/>
        </authorList>
    </citation>
    <scope>NUCLEOTIDE SEQUENCE [LARGE SCALE GENOMIC DNA]</scope>
    <source>
        <strain>cv. Columbia</strain>
    </source>
</reference>
<reference key="2">
    <citation type="journal article" date="2017" name="Plant J.">
        <title>Araport11: a complete reannotation of the Arabidopsis thaliana reference genome.</title>
        <authorList>
            <person name="Cheng C.Y."/>
            <person name="Krishnakumar V."/>
            <person name="Chan A.P."/>
            <person name="Thibaud-Nissen F."/>
            <person name="Schobel S."/>
            <person name="Town C.D."/>
        </authorList>
    </citation>
    <scope>GENOME REANNOTATION</scope>
    <source>
        <strain>cv. Columbia</strain>
    </source>
</reference>
<reference key="3">
    <citation type="journal article" date="2012" name="Plant J.">
        <title>The SAUR19 subfamily of SMALL AUXIN UP RNA genes promote cell expansion.</title>
        <authorList>
            <person name="Spartz A.K."/>
            <person name="Lee S.H."/>
            <person name="Wenger J.P."/>
            <person name="Gonzalez N."/>
            <person name="Itoh H."/>
            <person name="Inze D."/>
            <person name="Peer W.A."/>
            <person name="Murphy A.S."/>
            <person name="Overvoorde P.J."/>
            <person name="Gray W.M."/>
        </authorList>
    </citation>
    <scope>GENE FAMILY</scope>
    <source>
        <strain>cv. Columbia</strain>
    </source>
</reference>
<reference key="4">
    <citation type="journal article" date="2019" name="New Phytol.">
        <title>Natural variations of growth thermo-responsiveness determined by SAUR26/27/28 proteins in Arabidopsis thaliana.</title>
        <authorList>
            <person name="Wang Z."/>
            <person name="Yang L."/>
            <person name="Liu Z."/>
            <person name="Lu M."/>
            <person name="Wang M."/>
            <person name="Sun Q."/>
            <person name="Lan Y."/>
            <person name="Shi T."/>
            <person name="Wu D."/>
            <person name="Hua J."/>
        </authorList>
    </citation>
    <scope>FUNCTION</scope>
    <scope>DISRUPTION PHENOTYPE</scope>
    <scope>INDUCTION BY TEMPERATURE AND PIF4</scope>
    <source>
        <strain>cv. Alst-1</strain>
        <strain>cv. Ang-0</strain>
        <strain>cv. Columbia</strain>
        <strain>cv. Com-0</strain>
        <strain>cv. Dja-1</strain>
        <strain>cv. El-0</strain>
        <strain>cv. Kon</strain>
    </source>
</reference>
<organism>
    <name type="scientific">Arabidopsis thaliana</name>
    <name type="common">Mouse-ear cress</name>
    <dbReference type="NCBI Taxonomy" id="3702"/>
    <lineage>
        <taxon>Eukaryota</taxon>
        <taxon>Viridiplantae</taxon>
        <taxon>Streptophyta</taxon>
        <taxon>Embryophyta</taxon>
        <taxon>Tracheophyta</taxon>
        <taxon>Spermatophyta</taxon>
        <taxon>Magnoliopsida</taxon>
        <taxon>eudicotyledons</taxon>
        <taxon>Gunneridae</taxon>
        <taxon>Pentapetalae</taxon>
        <taxon>rosids</taxon>
        <taxon>malvids</taxon>
        <taxon>Brassicales</taxon>
        <taxon>Brassicaceae</taxon>
        <taxon>Camelineae</taxon>
        <taxon>Arabidopsis</taxon>
    </lineage>
</organism>